<proteinExistence type="evidence at transcript level"/>
<comment type="function">
    <text evidence="2">Triosephosphate isomerase is an extremely efficient metabolic enzyme that catalyzes the interconversion between dihydroxyacetone phosphate (DHAP) and D-glyceraldehyde-3-phosphate (G3P) in glycolysis and gluconeogenesis.</text>
</comment>
<comment type="function">
    <text evidence="2">It is also responsible for the non-negligible production of methylglyoxal a reactive cytotoxic side-product that modifies and can alter proteins, DNA and lipids.</text>
</comment>
<comment type="catalytic activity">
    <reaction evidence="2">
        <text>dihydroxyacetone phosphate = methylglyoxal + phosphate</text>
        <dbReference type="Rhea" id="RHEA:17937"/>
        <dbReference type="ChEBI" id="CHEBI:17158"/>
        <dbReference type="ChEBI" id="CHEBI:43474"/>
        <dbReference type="ChEBI" id="CHEBI:57642"/>
        <dbReference type="EC" id="4.2.3.3"/>
    </reaction>
</comment>
<comment type="catalytic activity">
    <reaction evidence="3">
        <text>D-glyceraldehyde 3-phosphate = dihydroxyacetone phosphate</text>
        <dbReference type="Rhea" id="RHEA:18585"/>
        <dbReference type="ChEBI" id="CHEBI:57642"/>
        <dbReference type="ChEBI" id="CHEBI:59776"/>
        <dbReference type="EC" id="5.3.1.1"/>
    </reaction>
</comment>
<comment type="pathway">
    <text evidence="3">Carbohydrate degradation; glycolysis; D-glyceraldehyde 3-phosphate from glycerone phosphate: step 1/1.</text>
</comment>
<comment type="pathway">
    <text evidence="3">Carbohydrate biosynthesis; gluconeogenesis.</text>
</comment>
<comment type="subunit">
    <text evidence="3">Homodimer.</text>
</comment>
<comment type="subcellular location">
    <subcellularLocation>
        <location evidence="3">Cytoplasm</location>
    </subcellularLocation>
</comment>
<comment type="similarity">
    <text evidence="4">Belongs to the triosephosphate isomerase family.</text>
</comment>
<organism>
    <name type="scientific">Danio rerio</name>
    <name type="common">Zebrafish</name>
    <name type="synonym">Brachydanio rerio</name>
    <dbReference type="NCBI Taxonomy" id="7955"/>
    <lineage>
        <taxon>Eukaryota</taxon>
        <taxon>Metazoa</taxon>
        <taxon>Chordata</taxon>
        <taxon>Craniata</taxon>
        <taxon>Vertebrata</taxon>
        <taxon>Euteleostomi</taxon>
        <taxon>Actinopterygii</taxon>
        <taxon>Neopterygii</taxon>
        <taxon>Teleostei</taxon>
        <taxon>Ostariophysi</taxon>
        <taxon>Cypriniformes</taxon>
        <taxon>Danionidae</taxon>
        <taxon>Danioninae</taxon>
        <taxon>Danio</taxon>
    </lineage>
</organism>
<feature type="initiator methionine" description="Removed" evidence="1">
    <location>
        <position position="1"/>
    </location>
</feature>
<feature type="chain" id="PRO_0000345140" description="Triosephosphate isomerase A">
    <location>
        <begin position="2"/>
        <end position="248"/>
    </location>
</feature>
<feature type="active site" description="Electrophile" evidence="3">
    <location>
        <position position="95"/>
    </location>
</feature>
<feature type="active site" description="Proton acceptor" evidence="3">
    <location>
        <position position="165"/>
    </location>
</feature>
<feature type="binding site" evidence="3">
    <location>
        <position position="11"/>
    </location>
    <ligand>
        <name>substrate</name>
    </ligand>
</feature>
<feature type="binding site" evidence="3">
    <location>
        <position position="13"/>
    </location>
    <ligand>
        <name>substrate</name>
    </ligand>
</feature>
<feature type="sequence conflict" description="In Ref. 1; AAK85203." evidence="4" ref="1">
    <original>E</original>
    <variation>K</variation>
    <location>
        <position position="36"/>
    </location>
</feature>
<feature type="sequence conflict" description="In Ref. 2; AAH49500." evidence="4" ref="2">
    <original>R</original>
    <variation>K</variation>
    <location>
        <position position="134"/>
    </location>
</feature>
<feature type="sequence conflict" description="In Ref. 2; AAH49500." evidence="4" ref="2">
    <original>E</original>
    <variation>G</variation>
    <location>
        <position position="179"/>
    </location>
</feature>
<feature type="sequence conflict" description="In Ref. 1; AAK85203." evidence="4" ref="1">
    <original>G</original>
    <variation>E</variation>
    <location>
        <position position="190"/>
    </location>
</feature>
<dbReference type="EC" id="5.3.1.1" evidence="3"/>
<dbReference type="EC" id="4.2.3.3" evidence="2"/>
<dbReference type="EMBL" id="AF387820">
    <property type="protein sequence ID" value="AAK85203.1"/>
    <property type="molecule type" value="mRNA"/>
</dbReference>
<dbReference type="EMBL" id="AL772314">
    <property type="protein sequence ID" value="CAK11229.1"/>
    <property type="molecule type" value="Genomic_DNA"/>
</dbReference>
<dbReference type="EMBL" id="BC049500">
    <property type="protein sequence ID" value="AAH49500.1"/>
    <property type="molecule type" value="mRNA"/>
</dbReference>
<dbReference type="RefSeq" id="NP_705953.1">
    <property type="nucleotide sequence ID" value="NM_153667.2"/>
</dbReference>
<dbReference type="SMR" id="Q1MTI4"/>
<dbReference type="FunCoup" id="Q1MTI4">
    <property type="interactions" value="1982"/>
</dbReference>
<dbReference type="STRING" id="7955.ENSDARP00000033907"/>
<dbReference type="PaxDb" id="7955-ENSDARP00000033907"/>
<dbReference type="Ensembl" id="ENSDART00000037007">
    <property type="protein sequence ID" value="ENSDARP00000033907"/>
    <property type="gene ID" value="ENSDARG00000025012"/>
</dbReference>
<dbReference type="GeneID" id="192309"/>
<dbReference type="KEGG" id="dre:192309"/>
<dbReference type="AGR" id="ZFIN:ZDB-GENE-020416-3"/>
<dbReference type="CTD" id="192309"/>
<dbReference type="ZFIN" id="ZDB-GENE-020416-3">
    <property type="gene designation" value="tpi1a"/>
</dbReference>
<dbReference type="eggNOG" id="KOG1643">
    <property type="taxonomic scope" value="Eukaryota"/>
</dbReference>
<dbReference type="HOGENOM" id="CLU_024251_2_0_1"/>
<dbReference type="InParanoid" id="Q1MTI4"/>
<dbReference type="OMA" id="MHWADAG"/>
<dbReference type="OrthoDB" id="6715177at2759"/>
<dbReference type="PhylomeDB" id="Q1MTI4"/>
<dbReference type="TreeFam" id="TF300829"/>
<dbReference type="UniPathway" id="UPA00109">
    <property type="reaction ID" value="UER00189"/>
</dbReference>
<dbReference type="UniPathway" id="UPA00138"/>
<dbReference type="PRO" id="PR:Q1MTI4"/>
<dbReference type="Proteomes" id="UP000000437">
    <property type="component" value="Chromosome 19"/>
</dbReference>
<dbReference type="Bgee" id="ENSDARG00000025012">
    <property type="expression patterns" value="Expressed in testis and 25 other cell types or tissues"/>
</dbReference>
<dbReference type="ExpressionAtlas" id="Q1MTI4">
    <property type="expression patterns" value="baseline and differential"/>
</dbReference>
<dbReference type="GO" id="GO:0005829">
    <property type="term" value="C:cytosol"/>
    <property type="evidence" value="ECO:0000318"/>
    <property type="project" value="GO_Central"/>
</dbReference>
<dbReference type="GO" id="GO:0008929">
    <property type="term" value="F:methylglyoxal synthase activity"/>
    <property type="evidence" value="ECO:0000250"/>
    <property type="project" value="UniProtKB"/>
</dbReference>
<dbReference type="GO" id="GO:0042803">
    <property type="term" value="F:protein homodimerization activity"/>
    <property type="evidence" value="ECO:0000250"/>
    <property type="project" value="UniProtKB"/>
</dbReference>
<dbReference type="GO" id="GO:0004807">
    <property type="term" value="F:triose-phosphate isomerase activity"/>
    <property type="evidence" value="ECO:0000250"/>
    <property type="project" value="UniProtKB"/>
</dbReference>
<dbReference type="GO" id="GO:0006094">
    <property type="term" value="P:gluconeogenesis"/>
    <property type="evidence" value="ECO:0000318"/>
    <property type="project" value="GO_Central"/>
</dbReference>
<dbReference type="GO" id="GO:0046166">
    <property type="term" value="P:glyceraldehyde-3-phosphate biosynthetic process"/>
    <property type="evidence" value="ECO:0000250"/>
    <property type="project" value="UniProtKB"/>
</dbReference>
<dbReference type="GO" id="GO:0019563">
    <property type="term" value="P:glycerol catabolic process"/>
    <property type="evidence" value="ECO:0000318"/>
    <property type="project" value="GO_Central"/>
</dbReference>
<dbReference type="GO" id="GO:0006096">
    <property type="term" value="P:glycolytic process"/>
    <property type="evidence" value="ECO:0000318"/>
    <property type="project" value="GO_Central"/>
</dbReference>
<dbReference type="GO" id="GO:0019242">
    <property type="term" value="P:methylglyoxal biosynthetic process"/>
    <property type="evidence" value="ECO:0000250"/>
    <property type="project" value="UniProtKB"/>
</dbReference>
<dbReference type="CDD" id="cd00311">
    <property type="entry name" value="TIM"/>
    <property type="match status" value="1"/>
</dbReference>
<dbReference type="FunFam" id="3.20.20.70:FF:000025">
    <property type="entry name" value="Triosephosphate isomerase"/>
    <property type="match status" value="1"/>
</dbReference>
<dbReference type="Gene3D" id="3.20.20.70">
    <property type="entry name" value="Aldolase class I"/>
    <property type="match status" value="1"/>
</dbReference>
<dbReference type="HAMAP" id="MF_00147_B">
    <property type="entry name" value="TIM_B"/>
    <property type="match status" value="1"/>
</dbReference>
<dbReference type="InterPro" id="IPR013785">
    <property type="entry name" value="Aldolase_TIM"/>
</dbReference>
<dbReference type="InterPro" id="IPR035990">
    <property type="entry name" value="TIM_sf"/>
</dbReference>
<dbReference type="InterPro" id="IPR022896">
    <property type="entry name" value="TrioseP_Isoase_bac/euk"/>
</dbReference>
<dbReference type="InterPro" id="IPR000652">
    <property type="entry name" value="Triosephosphate_isomerase"/>
</dbReference>
<dbReference type="InterPro" id="IPR020861">
    <property type="entry name" value="Triosephosphate_isomerase_AS"/>
</dbReference>
<dbReference type="NCBIfam" id="TIGR00419">
    <property type="entry name" value="tim"/>
    <property type="match status" value="1"/>
</dbReference>
<dbReference type="PANTHER" id="PTHR21139">
    <property type="entry name" value="TRIOSEPHOSPHATE ISOMERASE"/>
    <property type="match status" value="1"/>
</dbReference>
<dbReference type="PANTHER" id="PTHR21139:SF17">
    <property type="entry name" value="TRIOSEPHOSPHATE ISOMERASE A"/>
    <property type="match status" value="1"/>
</dbReference>
<dbReference type="Pfam" id="PF00121">
    <property type="entry name" value="TIM"/>
    <property type="match status" value="1"/>
</dbReference>
<dbReference type="SUPFAM" id="SSF51351">
    <property type="entry name" value="Triosephosphate isomerase (TIM)"/>
    <property type="match status" value="1"/>
</dbReference>
<dbReference type="PROSITE" id="PS00171">
    <property type="entry name" value="TIM_1"/>
    <property type="match status" value="1"/>
</dbReference>
<dbReference type="PROSITE" id="PS51440">
    <property type="entry name" value="TIM_2"/>
    <property type="match status" value="1"/>
</dbReference>
<reference key="1">
    <citation type="journal article" date="2001" name="Genetics">
        <title>Evidence for a period of directional selection following gene duplication in a neurally expressed locus of triosephosphate isomerase.</title>
        <authorList>
            <person name="Merritt T.J.S."/>
            <person name="Quattro J.M."/>
        </authorList>
    </citation>
    <scope>NUCLEOTIDE SEQUENCE [MRNA]</scope>
</reference>
<reference key="2">
    <citation type="journal article" date="2013" name="Nature">
        <title>The zebrafish reference genome sequence and its relationship to the human genome.</title>
        <authorList>
            <person name="Howe K."/>
            <person name="Clark M.D."/>
            <person name="Torroja C.F."/>
            <person name="Torrance J."/>
            <person name="Berthelot C."/>
            <person name="Muffato M."/>
            <person name="Collins J.E."/>
            <person name="Humphray S."/>
            <person name="McLaren K."/>
            <person name="Matthews L."/>
            <person name="McLaren S."/>
            <person name="Sealy I."/>
            <person name="Caccamo M."/>
            <person name="Churcher C."/>
            <person name="Scott C."/>
            <person name="Barrett J.C."/>
            <person name="Koch R."/>
            <person name="Rauch G.J."/>
            <person name="White S."/>
            <person name="Chow W."/>
            <person name="Kilian B."/>
            <person name="Quintais L.T."/>
            <person name="Guerra-Assuncao J.A."/>
            <person name="Zhou Y."/>
            <person name="Gu Y."/>
            <person name="Yen J."/>
            <person name="Vogel J.H."/>
            <person name="Eyre T."/>
            <person name="Redmond S."/>
            <person name="Banerjee R."/>
            <person name="Chi J."/>
            <person name="Fu B."/>
            <person name="Langley E."/>
            <person name="Maguire S.F."/>
            <person name="Laird G.K."/>
            <person name="Lloyd D."/>
            <person name="Kenyon E."/>
            <person name="Donaldson S."/>
            <person name="Sehra H."/>
            <person name="Almeida-King J."/>
            <person name="Loveland J."/>
            <person name="Trevanion S."/>
            <person name="Jones M."/>
            <person name="Quail M."/>
            <person name="Willey D."/>
            <person name="Hunt A."/>
            <person name="Burton J."/>
            <person name="Sims S."/>
            <person name="McLay K."/>
            <person name="Plumb B."/>
            <person name="Davis J."/>
            <person name="Clee C."/>
            <person name="Oliver K."/>
            <person name="Clark R."/>
            <person name="Riddle C."/>
            <person name="Elliot D."/>
            <person name="Threadgold G."/>
            <person name="Harden G."/>
            <person name="Ware D."/>
            <person name="Begum S."/>
            <person name="Mortimore B."/>
            <person name="Kerry G."/>
            <person name="Heath P."/>
            <person name="Phillimore B."/>
            <person name="Tracey A."/>
            <person name="Corby N."/>
            <person name="Dunn M."/>
            <person name="Johnson C."/>
            <person name="Wood J."/>
            <person name="Clark S."/>
            <person name="Pelan S."/>
            <person name="Griffiths G."/>
            <person name="Smith M."/>
            <person name="Glithero R."/>
            <person name="Howden P."/>
            <person name="Barker N."/>
            <person name="Lloyd C."/>
            <person name="Stevens C."/>
            <person name="Harley J."/>
            <person name="Holt K."/>
            <person name="Panagiotidis G."/>
            <person name="Lovell J."/>
            <person name="Beasley H."/>
            <person name="Henderson C."/>
            <person name="Gordon D."/>
            <person name="Auger K."/>
            <person name="Wright D."/>
            <person name="Collins J."/>
            <person name="Raisen C."/>
            <person name="Dyer L."/>
            <person name="Leung K."/>
            <person name="Robertson L."/>
            <person name="Ambridge K."/>
            <person name="Leongamornlert D."/>
            <person name="McGuire S."/>
            <person name="Gilderthorp R."/>
            <person name="Griffiths C."/>
            <person name="Manthravadi D."/>
            <person name="Nichol S."/>
            <person name="Barker G."/>
            <person name="Whitehead S."/>
            <person name="Kay M."/>
            <person name="Brown J."/>
            <person name="Murnane C."/>
            <person name="Gray E."/>
            <person name="Humphries M."/>
            <person name="Sycamore N."/>
            <person name="Barker D."/>
            <person name="Saunders D."/>
            <person name="Wallis J."/>
            <person name="Babbage A."/>
            <person name="Hammond S."/>
            <person name="Mashreghi-Mohammadi M."/>
            <person name="Barr L."/>
            <person name="Martin S."/>
            <person name="Wray P."/>
            <person name="Ellington A."/>
            <person name="Matthews N."/>
            <person name="Ellwood M."/>
            <person name="Woodmansey R."/>
            <person name="Clark G."/>
            <person name="Cooper J."/>
            <person name="Tromans A."/>
            <person name="Grafham D."/>
            <person name="Skuce C."/>
            <person name="Pandian R."/>
            <person name="Andrews R."/>
            <person name="Harrison E."/>
            <person name="Kimberley A."/>
            <person name="Garnett J."/>
            <person name="Fosker N."/>
            <person name="Hall R."/>
            <person name="Garner P."/>
            <person name="Kelly D."/>
            <person name="Bird C."/>
            <person name="Palmer S."/>
            <person name="Gehring I."/>
            <person name="Berger A."/>
            <person name="Dooley C.M."/>
            <person name="Ersan-Urun Z."/>
            <person name="Eser C."/>
            <person name="Geiger H."/>
            <person name="Geisler M."/>
            <person name="Karotki L."/>
            <person name="Kirn A."/>
            <person name="Konantz J."/>
            <person name="Konantz M."/>
            <person name="Oberlander M."/>
            <person name="Rudolph-Geiger S."/>
            <person name="Teucke M."/>
            <person name="Lanz C."/>
            <person name="Raddatz G."/>
            <person name="Osoegawa K."/>
            <person name="Zhu B."/>
            <person name="Rapp A."/>
            <person name="Widaa S."/>
            <person name="Langford C."/>
            <person name="Yang F."/>
            <person name="Schuster S.C."/>
            <person name="Carter N.P."/>
            <person name="Harrow J."/>
            <person name="Ning Z."/>
            <person name="Herrero J."/>
            <person name="Searle S.M."/>
            <person name="Enright A."/>
            <person name="Geisler R."/>
            <person name="Plasterk R.H."/>
            <person name="Lee C."/>
            <person name="Westerfield M."/>
            <person name="de Jong P.J."/>
            <person name="Zon L.I."/>
            <person name="Postlethwait J.H."/>
            <person name="Nusslein-Volhard C."/>
            <person name="Hubbard T.J."/>
            <person name="Roest Crollius H."/>
            <person name="Rogers J."/>
            <person name="Stemple D.L."/>
        </authorList>
    </citation>
    <scope>NUCLEOTIDE SEQUENCE [LARGE SCALE GENOMIC DNA]</scope>
    <source>
        <strain>Tuebingen</strain>
    </source>
</reference>
<reference key="3">
    <citation type="submission" date="2003-03" db="EMBL/GenBank/DDBJ databases">
        <authorList>
            <consortium name="NIH - Zebrafish Gene Collection (ZGC) project"/>
        </authorList>
    </citation>
    <scope>NUCLEOTIDE SEQUENCE [LARGE SCALE MRNA]</scope>
</reference>
<name>TPISA_DANRE</name>
<evidence type="ECO:0000250" key="1"/>
<evidence type="ECO:0000250" key="2">
    <source>
        <dbReference type="UniProtKB" id="P00939"/>
    </source>
</evidence>
<evidence type="ECO:0000255" key="3">
    <source>
        <dbReference type="PROSITE-ProRule" id="PRU10127"/>
    </source>
</evidence>
<evidence type="ECO:0000305" key="4"/>
<keyword id="KW-0963">Cytoplasm</keyword>
<keyword id="KW-0312">Gluconeogenesis</keyword>
<keyword id="KW-0324">Glycolysis</keyword>
<keyword id="KW-0413">Isomerase</keyword>
<keyword id="KW-0456">Lyase</keyword>
<keyword id="KW-1185">Reference proteome</keyword>
<protein>
    <recommendedName>
        <fullName>Triosephosphate isomerase A</fullName>
        <shortName>TIM-A</shortName>
        <ecNumber evidence="3">5.3.1.1</ecNumber>
    </recommendedName>
    <alternativeName>
        <fullName evidence="2">Methylglyoxal synthase A</fullName>
        <ecNumber evidence="2">4.2.3.3</ecNumber>
    </alternativeName>
    <alternativeName>
        <fullName>Triose-phosphate isomerase A</fullName>
    </alternativeName>
</protein>
<accession>Q1MTI4</accession>
<accession>Q7ZWB0</accession>
<accession>Q90XF9</accession>
<gene>
    <name type="primary">tpi1a</name>
    <name type="ORF">si:dkey-89b17.2</name>
</gene>
<sequence length="248" mass="26853">MSSRKFFVGGNWKMNGDKESLGELIMTLNTASLNDETDVVCGAPSIYLDYARSKLDQRIGVAAQNCYKVPKGAFTGEISPAMIKDCGIDWVILGHSERRHVFGESDELIGQKVAHCLESDLGVIACIGEKLEEREAGTTEDVVFEQTKVIADNVKDWTRVVLAYEPVWAIGTGKTASPEQAQEVHEKLRGWLRANVSDAVADSVRIIYGGSVTGGNCKELAAQADVDGFLVGGASLKPEFVDIINARS</sequence>